<organism>
    <name type="scientific">Wolinella succinogenes (strain ATCC 29543 / DSM 1740 / CCUG 13145 / JCM 31913 / LMG 7466 / NCTC 11488 / FDC 602W)</name>
    <name type="common">Vibrio succinogenes</name>
    <dbReference type="NCBI Taxonomy" id="273121"/>
    <lineage>
        <taxon>Bacteria</taxon>
        <taxon>Pseudomonadati</taxon>
        <taxon>Campylobacterota</taxon>
        <taxon>Epsilonproteobacteria</taxon>
        <taxon>Campylobacterales</taxon>
        <taxon>Helicobacteraceae</taxon>
        <taxon>Wolinella</taxon>
    </lineage>
</organism>
<gene>
    <name evidence="1" type="primary">groES</name>
    <name evidence="1" type="synonym">groS</name>
    <name type="ordered locus">WS0309</name>
</gene>
<proteinExistence type="inferred from homology"/>
<accession>Q7MAE2</accession>
<sequence length="89" mass="9733">MNFKPLGQRVLVERLEEDTKTASGIIIPDNAKEKPLMGTVKALSEEVAKEGLLKAGSQVVFAKYSGTDVKLEGKEYLILKVEDLLGTIE</sequence>
<dbReference type="EMBL" id="BX571657">
    <property type="protein sequence ID" value="CAE09460.1"/>
    <property type="molecule type" value="Genomic_DNA"/>
</dbReference>
<dbReference type="RefSeq" id="WP_011138261.1">
    <property type="nucleotide sequence ID" value="NC_005090.1"/>
</dbReference>
<dbReference type="SMR" id="Q7MAE2"/>
<dbReference type="STRING" id="273121.WS0309"/>
<dbReference type="KEGG" id="wsu:WS0309"/>
<dbReference type="eggNOG" id="COG0234">
    <property type="taxonomic scope" value="Bacteria"/>
</dbReference>
<dbReference type="HOGENOM" id="CLU_132825_2_0_7"/>
<dbReference type="Proteomes" id="UP000000422">
    <property type="component" value="Chromosome"/>
</dbReference>
<dbReference type="GO" id="GO:0005737">
    <property type="term" value="C:cytoplasm"/>
    <property type="evidence" value="ECO:0007669"/>
    <property type="project" value="UniProtKB-SubCell"/>
</dbReference>
<dbReference type="GO" id="GO:0005524">
    <property type="term" value="F:ATP binding"/>
    <property type="evidence" value="ECO:0007669"/>
    <property type="project" value="InterPro"/>
</dbReference>
<dbReference type="GO" id="GO:0046872">
    <property type="term" value="F:metal ion binding"/>
    <property type="evidence" value="ECO:0007669"/>
    <property type="project" value="TreeGrafter"/>
</dbReference>
<dbReference type="GO" id="GO:0044183">
    <property type="term" value="F:protein folding chaperone"/>
    <property type="evidence" value="ECO:0007669"/>
    <property type="project" value="InterPro"/>
</dbReference>
<dbReference type="GO" id="GO:0051087">
    <property type="term" value="F:protein-folding chaperone binding"/>
    <property type="evidence" value="ECO:0007669"/>
    <property type="project" value="TreeGrafter"/>
</dbReference>
<dbReference type="GO" id="GO:0051082">
    <property type="term" value="F:unfolded protein binding"/>
    <property type="evidence" value="ECO:0007669"/>
    <property type="project" value="TreeGrafter"/>
</dbReference>
<dbReference type="GO" id="GO:0051085">
    <property type="term" value="P:chaperone cofactor-dependent protein refolding"/>
    <property type="evidence" value="ECO:0007669"/>
    <property type="project" value="TreeGrafter"/>
</dbReference>
<dbReference type="CDD" id="cd00320">
    <property type="entry name" value="cpn10"/>
    <property type="match status" value="1"/>
</dbReference>
<dbReference type="FunFam" id="2.30.33.40:FF:000001">
    <property type="entry name" value="10 kDa chaperonin"/>
    <property type="match status" value="1"/>
</dbReference>
<dbReference type="Gene3D" id="2.30.33.40">
    <property type="entry name" value="GroES chaperonin"/>
    <property type="match status" value="1"/>
</dbReference>
<dbReference type="HAMAP" id="MF_00580">
    <property type="entry name" value="CH10"/>
    <property type="match status" value="1"/>
</dbReference>
<dbReference type="InterPro" id="IPR020818">
    <property type="entry name" value="Chaperonin_GroES"/>
</dbReference>
<dbReference type="InterPro" id="IPR037124">
    <property type="entry name" value="Chaperonin_GroES_sf"/>
</dbReference>
<dbReference type="InterPro" id="IPR011032">
    <property type="entry name" value="GroES-like_sf"/>
</dbReference>
<dbReference type="NCBIfam" id="NF001537">
    <property type="entry name" value="PRK00364.3-3"/>
    <property type="match status" value="1"/>
</dbReference>
<dbReference type="PANTHER" id="PTHR10772">
    <property type="entry name" value="10 KDA HEAT SHOCK PROTEIN"/>
    <property type="match status" value="1"/>
</dbReference>
<dbReference type="PANTHER" id="PTHR10772:SF58">
    <property type="entry name" value="CO-CHAPERONIN GROES"/>
    <property type="match status" value="1"/>
</dbReference>
<dbReference type="Pfam" id="PF00166">
    <property type="entry name" value="Cpn10"/>
    <property type="match status" value="1"/>
</dbReference>
<dbReference type="PRINTS" id="PR00297">
    <property type="entry name" value="CHAPERONIN10"/>
</dbReference>
<dbReference type="SMART" id="SM00883">
    <property type="entry name" value="Cpn10"/>
    <property type="match status" value="1"/>
</dbReference>
<dbReference type="SUPFAM" id="SSF50129">
    <property type="entry name" value="GroES-like"/>
    <property type="match status" value="1"/>
</dbReference>
<protein>
    <recommendedName>
        <fullName evidence="1">Co-chaperonin GroES</fullName>
    </recommendedName>
    <alternativeName>
        <fullName evidence="1">10 kDa chaperonin</fullName>
    </alternativeName>
    <alternativeName>
        <fullName evidence="1">Chaperonin-10</fullName>
        <shortName evidence="1">Cpn10</shortName>
    </alternativeName>
</protein>
<name>CH10_WOLSU</name>
<comment type="function">
    <text evidence="1">Together with the chaperonin GroEL, plays an essential role in assisting protein folding. The GroEL-GroES system forms a nano-cage that allows encapsulation of the non-native substrate proteins and provides a physical environment optimized to promote and accelerate protein folding. GroES binds to the apical surface of the GroEL ring, thereby capping the opening of the GroEL channel.</text>
</comment>
<comment type="subunit">
    <text evidence="1">Heptamer of 7 subunits arranged in a ring. Interacts with the chaperonin GroEL.</text>
</comment>
<comment type="subcellular location">
    <subcellularLocation>
        <location evidence="1">Cytoplasm</location>
    </subcellularLocation>
</comment>
<comment type="similarity">
    <text evidence="1">Belongs to the GroES chaperonin family.</text>
</comment>
<feature type="chain" id="PRO_0000174902" description="Co-chaperonin GroES">
    <location>
        <begin position="1"/>
        <end position="89"/>
    </location>
</feature>
<keyword id="KW-0143">Chaperone</keyword>
<keyword id="KW-0963">Cytoplasm</keyword>
<keyword id="KW-1185">Reference proteome</keyword>
<evidence type="ECO:0000255" key="1">
    <source>
        <dbReference type="HAMAP-Rule" id="MF_00580"/>
    </source>
</evidence>
<reference key="1">
    <citation type="journal article" date="2003" name="Proc. Natl. Acad. Sci. U.S.A.">
        <title>Complete genome sequence and analysis of Wolinella succinogenes.</title>
        <authorList>
            <person name="Baar C."/>
            <person name="Eppinger M."/>
            <person name="Raddatz G."/>
            <person name="Simon J."/>
            <person name="Lanz C."/>
            <person name="Klimmek O."/>
            <person name="Nandakumar R."/>
            <person name="Gross R."/>
            <person name="Rosinus A."/>
            <person name="Keller H."/>
            <person name="Jagtap P."/>
            <person name="Linke B."/>
            <person name="Meyer F."/>
            <person name="Lederer H."/>
            <person name="Schuster S.C."/>
        </authorList>
    </citation>
    <scope>NUCLEOTIDE SEQUENCE [LARGE SCALE GENOMIC DNA]</scope>
    <source>
        <strain>ATCC 29543 / DSM 1740 / CCUG 13145 / JCM 31913 / LMG 7466 / NCTC 11488 / FDC 602W</strain>
    </source>
</reference>